<sequence>MAVKIRLTRLGSKRNPFYRIVVADARSPRDGRIIEQIGTYNPTSANAPEIKVDEALALKWLNDGAKPTDTVHNILSKEGIMKKFDEQKKAK</sequence>
<comment type="similarity">
    <text evidence="1">Belongs to the bacterial ribosomal protein bS16 family.</text>
</comment>
<protein>
    <recommendedName>
        <fullName evidence="1">Small ribosomal subunit protein bS16</fullName>
    </recommendedName>
    <alternativeName>
        <fullName evidence="2">30S ribosomal protein S16</fullName>
    </alternativeName>
</protein>
<evidence type="ECO:0000255" key="1">
    <source>
        <dbReference type="HAMAP-Rule" id="MF_00385"/>
    </source>
</evidence>
<evidence type="ECO:0000305" key="2"/>
<gene>
    <name evidence="1" type="primary">rpsP</name>
    <name type="ordered locus">MW1121</name>
</gene>
<proteinExistence type="evidence at protein level"/>
<accession>P66441</accession>
<accession>Q99UN2</accession>
<feature type="chain" id="PRO_0000167246" description="Small ribosomal subunit protein bS16">
    <location>
        <begin position="1"/>
        <end position="91"/>
    </location>
</feature>
<organism>
    <name type="scientific">Staphylococcus aureus (strain MW2)</name>
    <dbReference type="NCBI Taxonomy" id="196620"/>
    <lineage>
        <taxon>Bacteria</taxon>
        <taxon>Bacillati</taxon>
        <taxon>Bacillota</taxon>
        <taxon>Bacilli</taxon>
        <taxon>Bacillales</taxon>
        <taxon>Staphylococcaceae</taxon>
        <taxon>Staphylococcus</taxon>
    </lineage>
</organism>
<reference key="1">
    <citation type="journal article" date="2002" name="Lancet">
        <title>Genome and virulence determinants of high virulence community-acquired MRSA.</title>
        <authorList>
            <person name="Baba T."/>
            <person name="Takeuchi F."/>
            <person name="Kuroda M."/>
            <person name="Yuzawa H."/>
            <person name="Aoki K."/>
            <person name="Oguchi A."/>
            <person name="Nagai Y."/>
            <person name="Iwama N."/>
            <person name="Asano K."/>
            <person name="Naimi T."/>
            <person name="Kuroda H."/>
            <person name="Cui L."/>
            <person name="Yamamoto K."/>
            <person name="Hiramatsu K."/>
        </authorList>
    </citation>
    <scope>NUCLEOTIDE SEQUENCE [LARGE SCALE GENOMIC DNA]</scope>
    <source>
        <strain>MW2</strain>
    </source>
</reference>
<keyword id="KW-0002">3D-structure</keyword>
<keyword id="KW-0687">Ribonucleoprotein</keyword>
<keyword id="KW-0689">Ribosomal protein</keyword>
<name>RS16_STAAW</name>
<dbReference type="EMBL" id="BA000033">
    <property type="protein sequence ID" value="BAB94986.1"/>
    <property type="molecule type" value="Genomic_DNA"/>
</dbReference>
<dbReference type="RefSeq" id="WP_000268754.1">
    <property type="nucleotide sequence ID" value="NC_003923.1"/>
</dbReference>
<dbReference type="PDB" id="8Y38">
    <property type="method" value="EM"/>
    <property type="resolution" value="2.58 A"/>
    <property type="chains" value="p=1-91"/>
</dbReference>
<dbReference type="PDB" id="8Y39">
    <property type="method" value="EM"/>
    <property type="resolution" value="3.60 A"/>
    <property type="chains" value="p=1-91"/>
</dbReference>
<dbReference type="PDBsum" id="8Y38"/>
<dbReference type="PDBsum" id="8Y39"/>
<dbReference type="EMDB" id="EMD-38875"/>
<dbReference type="EMDB" id="EMD-38876"/>
<dbReference type="SMR" id="P66441"/>
<dbReference type="GeneID" id="66839430"/>
<dbReference type="KEGG" id="sam:MW1121"/>
<dbReference type="HOGENOM" id="CLU_100590_5_0_9"/>
<dbReference type="GO" id="GO:0005737">
    <property type="term" value="C:cytoplasm"/>
    <property type="evidence" value="ECO:0007669"/>
    <property type="project" value="UniProtKB-ARBA"/>
</dbReference>
<dbReference type="GO" id="GO:0015935">
    <property type="term" value="C:small ribosomal subunit"/>
    <property type="evidence" value="ECO:0007669"/>
    <property type="project" value="TreeGrafter"/>
</dbReference>
<dbReference type="GO" id="GO:0003735">
    <property type="term" value="F:structural constituent of ribosome"/>
    <property type="evidence" value="ECO:0007669"/>
    <property type="project" value="InterPro"/>
</dbReference>
<dbReference type="GO" id="GO:0006412">
    <property type="term" value="P:translation"/>
    <property type="evidence" value="ECO:0007669"/>
    <property type="project" value="UniProtKB-UniRule"/>
</dbReference>
<dbReference type="FunFam" id="3.30.1320.10:FF:000002">
    <property type="entry name" value="30S ribosomal protein S16"/>
    <property type="match status" value="1"/>
</dbReference>
<dbReference type="Gene3D" id="3.30.1320.10">
    <property type="match status" value="1"/>
</dbReference>
<dbReference type="HAMAP" id="MF_00385">
    <property type="entry name" value="Ribosomal_bS16"/>
    <property type="match status" value="1"/>
</dbReference>
<dbReference type="InterPro" id="IPR000307">
    <property type="entry name" value="Ribosomal_bS16"/>
</dbReference>
<dbReference type="InterPro" id="IPR023803">
    <property type="entry name" value="Ribosomal_bS16_dom_sf"/>
</dbReference>
<dbReference type="NCBIfam" id="TIGR00002">
    <property type="entry name" value="S16"/>
    <property type="match status" value="1"/>
</dbReference>
<dbReference type="PANTHER" id="PTHR12919">
    <property type="entry name" value="30S RIBOSOMAL PROTEIN S16"/>
    <property type="match status" value="1"/>
</dbReference>
<dbReference type="PANTHER" id="PTHR12919:SF20">
    <property type="entry name" value="SMALL RIBOSOMAL SUBUNIT PROTEIN BS16M"/>
    <property type="match status" value="1"/>
</dbReference>
<dbReference type="Pfam" id="PF00886">
    <property type="entry name" value="Ribosomal_S16"/>
    <property type="match status" value="1"/>
</dbReference>
<dbReference type="SUPFAM" id="SSF54565">
    <property type="entry name" value="Ribosomal protein S16"/>
    <property type="match status" value="1"/>
</dbReference>